<organism>
    <name type="scientific">Saccharomyces cerevisiae (strain ATCC 204508 / S288c)</name>
    <name type="common">Baker's yeast</name>
    <dbReference type="NCBI Taxonomy" id="559292"/>
    <lineage>
        <taxon>Eukaryota</taxon>
        <taxon>Fungi</taxon>
        <taxon>Dikarya</taxon>
        <taxon>Ascomycota</taxon>
        <taxon>Saccharomycotina</taxon>
        <taxon>Saccharomycetes</taxon>
        <taxon>Saccharomycetales</taxon>
        <taxon>Saccharomycetaceae</taxon>
        <taxon>Saccharomyces</taxon>
    </lineage>
</organism>
<sequence length="395" mass="45721">MSATSSSGDVKKFQAVPKPTSNASPPPASSGFNARTLWPDLIETPENQWVFECKDIIEKIGTNGPIAVEIKKNMEKCLMYFYTLKKKLNLFDHTYTASCILFYRYWFIYGIPTAITECIHISQGILVTACKTMENNRPIEAYIKATCEFLMQNIPSLKSRTNIDKLKWEFRDKLVTNEKKILCLFGFDLNISNPKELIEEVFSGYYRFNRDHNLPENFKKAFPKILQESRNFMVQAVTQPVSLLCDGYTFIVLSLIYCGLEYKKLVDKDFRYPKNFFKDRFPIEVTPENFANIFTDYKLLEENFFNLKSNKGAKLQIDSSMIDSVIDESGDVENEVSEISDPFNYELIKSGEVKEEFLNHIETRVKDLLDKAKQESMKRKAKDPIRTPDAKKPKI</sequence>
<dbReference type="EMBL" id="U19027">
    <property type="protein sequence ID" value="AAB67407.1"/>
    <property type="molecule type" value="Genomic_DNA"/>
</dbReference>
<dbReference type="EMBL" id="BK006945">
    <property type="protein sequence ID" value="DAA09542.1"/>
    <property type="molecule type" value="Genomic_DNA"/>
</dbReference>
<dbReference type="PIR" id="S51449">
    <property type="entry name" value="S51449"/>
</dbReference>
<dbReference type="RefSeq" id="NP_013327.1">
    <property type="nucleotide sequence ID" value="NM_001182113.1"/>
</dbReference>
<dbReference type="SMR" id="Q05949"/>
<dbReference type="BioGRID" id="31493">
    <property type="interactions" value="74"/>
</dbReference>
<dbReference type="ComplexPortal" id="CPX-1685">
    <property type="entry name" value="BUR1-BUR2 kinase complex"/>
</dbReference>
<dbReference type="DIP" id="DIP-4787N"/>
<dbReference type="FunCoup" id="Q05949">
    <property type="interactions" value="151"/>
</dbReference>
<dbReference type="IntAct" id="Q05949">
    <property type="interactions" value="5"/>
</dbReference>
<dbReference type="MINT" id="Q05949"/>
<dbReference type="STRING" id="4932.YLR226W"/>
<dbReference type="iPTMnet" id="Q05949"/>
<dbReference type="PaxDb" id="4932-YLR226W"/>
<dbReference type="PeptideAtlas" id="Q05949"/>
<dbReference type="EnsemblFungi" id="YLR226W_mRNA">
    <property type="protein sequence ID" value="YLR226W"/>
    <property type="gene ID" value="YLR226W"/>
</dbReference>
<dbReference type="GeneID" id="850923"/>
<dbReference type="KEGG" id="sce:YLR226W"/>
<dbReference type="AGR" id="SGD:S000004216"/>
<dbReference type="SGD" id="S000004216">
    <property type="gene designation" value="BUR2"/>
</dbReference>
<dbReference type="VEuPathDB" id="FungiDB:YLR226W"/>
<dbReference type="eggNOG" id="ENOG502QQE8">
    <property type="taxonomic scope" value="Eukaryota"/>
</dbReference>
<dbReference type="HOGENOM" id="CLU_698596_0_0_1"/>
<dbReference type="InParanoid" id="Q05949"/>
<dbReference type="OMA" id="LFFRYWY"/>
<dbReference type="OrthoDB" id="25002at2759"/>
<dbReference type="BioCyc" id="YEAST:G3O-32340-MONOMER"/>
<dbReference type="Reactome" id="R-SCE-674695">
    <property type="pathway name" value="RNA Polymerase II Pre-transcription Events"/>
</dbReference>
<dbReference type="Reactome" id="R-SCE-6796648">
    <property type="pathway name" value="TP53 Regulates Transcription of DNA Repair Genes"/>
</dbReference>
<dbReference type="Reactome" id="R-SCE-6807505">
    <property type="pathway name" value="RNA polymerase II transcribes snRNA genes"/>
</dbReference>
<dbReference type="Reactome" id="R-SCE-9018519">
    <property type="pathway name" value="Estrogen-dependent gene expression"/>
</dbReference>
<dbReference type="BioGRID-ORCS" id="850923">
    <property type="hits" value="10 hits in 10 CRISPR screens"/>
</dbReference>
<dbReference type="PRO" id="PR:Q05949"/>
<dbReference type="Proteomes" id="UP000002311">
    <property type="component" value="Chromosome XII"/>
</dbReference>
<dbReference type="RNAct" id="Q05949">
    <property type="molecule type" value="protein"/>
</dbReference>
<dbReference type="GO" id="GO:0000307">
    <property type="term" value="C:cyclin-dependent protein kinase holoenzyme complex"/>
    <property type="evidence" value="ECO:0000353"/>
    <property type="project" value="ComplexPortal"/>
</dbReference>
<dbReference type="GO" id="GO:0008024">
    <property type="term" value="C:cyclin/CDK positive transcription elongation factor complex"/>
    <property type="evidence" value="ECO:0000318"/>
    <property type="project" value="GO_Central"/>
</dbReference>
<dbReference type="GO" id="GO:0005634">
    <property type="term" value="C:nucleus"/>
    <property type="evidence" value="ECO:0007005"/>
    <property type="project" value="SGD"/>
</dbReference>
<dbReference type="GO" id="GO:0061575">
    <property type="term" value="F:cyclin-dependent protein serine/threonine kinase activator activity"/>
    <property type="evidence" value="ECO:0000318"/>
    <property type="project" value="GO_Central"/>
</dbReference>
<dbReference type="GO" id="GO:0016538">
    <property type="term" value="F:cyclin-dependent protein serine/threonine kinase regulator activity"/>
    <property type="evidence" value="ECO:0000314"/>
    <property type="project" value="SGD"/>
</dbReference>
<dbReference type="GO" id="GO:0006351">
    <property type="term" value="P:DNA-templated transcription"/>
    <property type="evidence" value="ECO:0000314"/>
    <property type="project" value="ComplexPortal"/>
</dbReference>
<dbReference type="GO" id="GO:0006353">
    <property type="term" value="P:DNA-templated transcription termination"/>
    <property type="evidence" value="ECO:0000315"/>
    <property type="project" value="SGD"/>
</dbReference>
<dbReference type="GO" id="GO:0032786">
    <property type="term" value="P:positive regulation of DNA-templated transcription, elongation"/>
    <property type="evidence" value="ECO:0000318"/>
    <property type="project" value="GO_Central"/>
</dbReference>
<dbReference type="GO" id="GO:0045944">
    <property type="term" value="P:positive regulation of transcription by RNA polymerase II"/>
    <property type="evidence" value="ECO:0000318"/>
    <property type="project" value="GO_Central"/>
</dbReference>
<dbReference type="GO" id="GO:0009302">
    <property type="term" value="P:sno(s)RNA transcription"/>
    <property type="evidence" value="ECO:0000315"/>
    <property type="project" value="SGD"/>
</dbReference>
<dbReference type="GO" id="GO:0006368">
    <property type="term" value="P:transcription elongation by RNA polymerase II"/>
    <property type="evidence" value="ECO:0000314"/>
    <property type="project" value="SGD"/>
</dbReference>
<dbReference type="FunFam" id="1.10.472.10:FF:000146">
    <property type="entry name" value="Bur2p"/>
    <property type="match status" value="1"/>
</dbReference>
<dbReference type="Gene3D" id="1.10.472.10">
    <property type="entry name" value="Cyclin-like"/>
    <property type="match status" value="1"/>
</dbReference>
<dbReference type="InterPro" id="IPR036915">
    <property type="entry name" value="Cyclin-like_sf"/>
</dbReference>
<dbReference type="SUPFAM" id="SSF47954">
    <property type="entry name" value="Cyclin-like"/>
    <property type="match status" value="1"/>
</dbReference>
<keyword id="KW-0131">Cell cycle</keyword>
<keyword id="KW-0539">Nucleus</keyword>
<keyword id="KW-0597">Phosphoprotein</keyword>
<keyword id="KW-1185">Reference proteome</keyword>
<keyword id="KW-0804">Transcription</keyword>
<keyword id="KW-0805">Transcription regulation</keyword>
<accession>Q05949</accession>
<accession>D6VYM6</accession>
<evidence type="ECO:0000256" key="1">
    <source>
        <dbReference type="SAM" id="MobiDB-lite"/>
    </source>
</evidence>
<evidence type="ECO:0000269" key="2">
    <source>
    </source>
</evidence>
<evidence type="ECO:0000269" key="3">
    <source>
    </source>
</evidence>
<evidence type="ECO:0000269" key="4">
    <source>
    </source>
</evidence>
<evidence type="ECO:0000269" key="5">
    <source>
    </source>
</evidence>
<evidence type="ECO:0000269" key="6">
    <source>
    </source>
</evidence>
<evidence type="ECO:0007744" key="7">
    <source>
    </source>
</evidence>
<name>BUR2_YEAST</name>
<proteinExistence type="evidence at protein level"/>
<protein>
    <recommendedName>
        <fullName>Protein BUR2</fullName>
    </recommendedName>
    <alternativeName>
        <fullName>Bypass UAS requirement protein 2</fullName>
    </alternativeName>
    <alternativeName>
        <fullName>Chromosome stability protein 4</fullName>
    </alternativeName>
</protein>
<reference key="1">
    <citation type="journal article" date="1997" name="Nature">
        <title>The nucleotide sequence of Saccharomyces cerevisiae chromosome XII.</title>
        <authorList>
            <person name="Johnston M."/>
            <person name="Hillier L.W."/>
            <person name="Riles L."/>
            <person name="Albermann K."/>
            <person name="Andre B."/>
            <person name="Ansorge W."/>
            <person name="Benes V."/>
            <person name="Brueckner M."/>
            <person name="Delius H."/>
            <person name="Dubois E."/>
            <person name="Duesterhoeft A."/>
            <person name="Entian K.-D."/>
            <person name="Floeth M."/>
            <person name="Goffeau A."/>
            <person name="Hebling U."/>
            <person name="Heumann K."/>
            <person name="Heuss-Neitzel D."/>
            <person name="Hilbert H."/>
            <person name="Hilger F."/>
            <person name="Kleine K."/>
            <person name="Koetter P."/>
            <person name="Louis E.J."/>
            <person name="Messenguy F."/>
            <person name="Mewes H.-W."/>
            <person name="Miosga T."/>
            <person name="Moestl D."/>
            <person name="Mueller-Auer S."/>
            <person name="Nentwich U."/>
            <person name="Obermaier B."/>
            <person name="Piravandi E."/>
            <person name="Pohl T.M."/>
            <person name="Portetelle D."/>
            <person name="Purnelle B."/>
            <person name="Rechmann S."/>
            <person name="Rieger M."/>
            <person name="Rinke M."/>
            <person name="Rose M."/>
            <person name="Scharfe M."/>
            <person name="Scherens B."/>
            <person name="Scholler P."/>
            <person name="Schwager C."/>
            <person name="Schwarz S."/>
            <person name="Underwood A.P."/>
            <person name="Urrestarazu L.A."/>
            <person name="Vandenbol M."/>
            <person name="Verhasselt P."/>
            <person name="Vierendeels F."/>
            <person name="Voet M."/>
            <person name="Volckaert G."/>
            <person name="Voss H."/>
            <person name="Wambutt R."/>
            <person name="Wedler E."/>
            <person name="Wedler H."/>
            <person name="Zimmermann F.K."/>
            <person name="Zollner A."/>
            <person name="Hani J."/>
            <person name="Hoheisel J.D."/>
        </authorList>
    </citation>
    <scope>NUCLEOTIDE SEQUENCE [LARGE SCALE GENOMIC DNA]</scope>
    <source>
        <strain>ATCC 204508 / S288c</strain>
    </source>
</reference>
<reference key="2">
    <citation type="journal article" date="2014" name="G3 (Bethesda)">
        <title>The reference genome sequence of Saccharomyces cerevisiae: Then and now.</title>
        <authorList>
            <person name="Engel S.R."/>
            <person name="Dietrich F.S."/>
            <person name="Fisk D.G."/>
            <person name="Binkley G."/>
            <person name="Balakrishnan R."/>
            <person name="Costanzo M.C."/>
            <person name="Dwight S.S."/>
            <person name="Hitz B.C."/>
            <person name="Karra K."/>
            <person name="Nash R.S."/>
            <person name="Weng S."/>
            <person name="Wong E.D."/>
            <person name="Lloyd P."/>
            <person name="Skrzypek M.S."/>
            <person name="Miyasato S.R."/>
            <person name="Simison M."/>
            <person name="Cherry J.M."/>
        </authorList>
    </citation>
    <scope>GENOME REANNOTATION</scope>
    <source>
        <strain>ATCC 204508 / S288c</strain>
    </source>
</reference>
<reference key="3">
    <citation type="journal article" date="1993" name="Genetics">
        <title>Mutations that suppress the deletion of an upstream activating sequence in yeast: involvement of a protein kinase and histone H3 in repressing transcription in vivo.</title>
        <authorList>
            <person name="Prelich G."/>
            <person name="Winston F."/>
        </authorList>
    </citation>
    <scope>FUNCTION</scope>
</reference>
<reference key="4">
    <citation type="journal article" date="1999" name="Nucleic Acids Res.">
        <title>New yeast genes important for chromosome integrity and segregation identified by dosage effects on genome stability.</title>
        <authorList>
            <person name="Ouspenski I.I."/>
            <person name="Elledge S.J."/>
            <person name="Brinkley B.R."/>
        </authorList>
    </citation>
    <scope>GENE NAME</scope>
</reference>
<reference key="5">
    <citation type="journal article" date="2000" name="Mol. Cell. Biol.">
        <title>BUR1 and BUR2 encode a divergent cyclin-dependent kinase-cyclin complex important for transcription in vivo.</title>
        <authorList>
            <person name="Yao S."/>
            <person name="Neiman A."/>
            <person name="Prelich G."/>
        </authorList>
    </citation>
    <scope>INTERACTION WITH BUR1</scope>
    <scope>FUNCTION</scope>
</reference>
<reference key="6">
    <citation type="journal article" date="2003" name="Nature">
        <title>Global analysis of protein localization in budding yeast.</title>
        <authorList>
            <person name="Huh W.-K."/>
            <person name="Falvo J.V."/>
            <person name="Gerke L.C."/>
            <person name="Carroll A.S."/>
            <person name="Howson R.W."/>
            <person name="Weissman J.S."/>
            <person name="O'Shea E.K."/>
        </authorList>
    </citation>
    <scope>SUBCELLULAR LOCATION [LARGE SCALE ANALYSIS]</scope>
</reference>
<reference key="7">
    <citation type="journal article" date="2003" name="Nature">
        <title>Global analysis of protein expression in yeast.</title>
        <authorList>
            <person name="Ghaemmaghami S."/>
            <person name="Huh W.-K."/>
            <person name="Bower K."/>
            <person name="Howson R.W."/>
            <person name="Belle A."/>
            <person name="Dephoure N."/>
            <person name="O'Shea E.K."/>
            <person name="Weissman J.S."/>
        </authorList>
    </citation>
    <scope>LEVEL OF PROTEIN EXPRESSION [LARGE SCALE ANALYSIS]</scope>
</reference>
<reference key="8">
    <citation type="journal article" date="2005" name="Curr. Biol.">
        <title>BUR kinase selectively regulates H3 K4 trimethylation and H2B ubiquitylation through recruitment of the PAF elongation complex.</title>
        <authorList>
            <person name="Laribee R.N."/>
            <person name="Krogan N.J."/>
            <person name="Xiao T."/>
            <person name="Shibata Y."/>
            <person name="Hughes T.R."/>
            <person name="Greenblatt J.F."/>
            <person name="Strahl B.D."/>
        </authorList>
    </citation>
    <scope>FUNCTION</scope>
</reference>
<reference key="9">
    <citation type="journal article" date="2008" name="Mol. Cell. Proteomics">
        <title>A multidimensional chromatography technology for in-depth phosphoproteome analysis.</title>
        <authorList>
            <person name="Albuquerque C.P."/>
            <person name="Smolka M.B."/>
            <person name="Payne S.H."/>
            <person name="Bafna V."/>
            <person name="Eng J."/>
            <person name="Zhou H."/>
        </authorList>
    </citation>
    <scope>PHOSPHORYLATION [LARGE SCALE ANALYSIS] AT SER-24</scope>
    <scope>IDENTIFICATION BY MASS SPECTROMETRY [LARGE SCALE ANALYSIS]</scope>
</reference>
<gene>
    <name type="primary">BUR2</name>
    <name type="synonym">CST4</name>
    <name type="ordered locus">YLR226W</name>
</gene>
<comment type="function">
    <text evidence="2 5 6">Component of the BUR kinase complex involved in transcription regulation. This complex phosphorylates 'Ser-120' of the UBC2/RAD6 ubiquitin-conjugating enzyme (E2), leading to monoubiquitination of histone H2B, the localization of the PAF1 complex to the chromatin, and the silencing of telomeric-associated genes. Also required for histone H3 'Lys-4' trimethylation. May phosphorylate the 'Ser-5' of the RBP1 carboxy-terminal domain (CTD) repeats. Necessary for the recovery from pheromone-induced growth arrest in the cell cycle G1 phase. Also required for vegetative growth itself. The kinase activity of the complex requires the presence of BUR2. Overexpression of BUR2 interferes with mitotic chromosome segregation.</text>
</comment>
<comment type="subunit">
    <text evidence="2">Belongs to the BUR kinase complex composed of SGV1/BUR1 and BUR2. Interacts with SGV1.</text>
</comment>
<comment type="interaction">
    <interactant intactId="EBI-30948">
        <id>Q05949</id>
    </interactant>
    <interactant intactId="EBI-17078">
        <id>P23293</id>
        <label>SGV1</label>
    </interactant>
    <organismsDiffer>false</organismsDiffer>
    <experiments>7</experiments>
</comment>
<comment type="subcellular location">
    <subcellularLocation>
        <location evidence="3">Nucleus</location>
    </subcellularLocation>
</comment>
<comment type="miscellaneous">
    <text evidence="4">Present with 2910 molecules/cell in log phase SD medium.</text>
</comment>
<feature type="chain" id="PRO_0000076186" description="Protein BUR2">
    <location>
        <begin position="1"/>
        <end position="395"/>
    </location>
</feature>
<feature type="region of interest" description="Disordered" evidence="1">
    <location>
        <begin position="1"/>
        <end position="31"/>
    </location>
</feature>
<feature type="region of interest" description="Disordered" evidence="1">
    <location>
        <begin position="372"/>
        <end position="395"/>
    </location>
</feature>
<feature type="modified residue" description="Phosphoserine" evidence="7">
    <location>
        <position position="24"/>
    </location>
</feature>